<feature type="chain" id="PRO_0000056328" description="Uncharacterized RING finger protein B0416.4">
    <location>
        <begin position="1"/>
        <end position="218"/>
    </location>
</feature>
<feature type="zinc finger region" description="RING-type" evidence="1">
    <location>
        <begin position="154"/>
        <end position="199"/>
    </location>
</feature>
<protein>
    <recommendedName>
        <fullName>Uncharacterized RING finger protein B0416.4</fullName>
    </recommendedName>
</protein>
<proteinExistence type="predicted"/>
<keyword id="KW-0479">Metal-binding</keyword>
<keyword id="KW-1185">Reference proteome</keyword>
<keyword id="KW-0862">Zinc</keyword>
<keyword id="KW-0863">Zinc-finger</keyword>
<accession>Q11072</accession>
<reference key="1">
    <citation type="journal article" date="1998" name="Science">
        <title>Genome sequence of the nematode C. elegans: a platform for investigating biology.</title>
        <authorList>
            <consortium name="The C. elegans sequencing consortium"/>
        </authorList>
    </citation>
    <scope>NUCLEOTIDE SEQUENCE [LARGE SCALE GENOMIC DNA]</scope>
    <source>
        <strain>Bristol N2</strain>
    </source>
</reference>
<name>YT44_CAEEL</name>
<gene>
    <name type="ORF">B0416.4</name>
</gene>
<organism>
    <name type="scientific">Caenorhabditis elegans</name>
    <dbReference type="NCBI Taxonomy" id="6239"/>
    <lineage>
        <taxon>Eukaryota</taxon>
        <taxon>Metazoa</taxon>
        <taxon>Ecdysozoa</taxon>
        <taxon>Nematoda</taxon>
        <taxon>Chromadorea</taxon>
        <taxon>Rhabditida</taxon>
        <taxon>Rhabditina</taxon>
        <taxon>Rhabditomorpha</taxon>
        <taxon>Rhabditoidea</taxon>
        <taxon>Rhabditidae</taxon>
        <taxon>Peloderinae</taxon>
        <taxon>Caenorhabditis</taxon>
    </lineage>
</organism>
<sequence>MAPIRRSSRLAERYDAIESKKRSLKRLEEQIKAEEEQFSDKMKQLEDEIKIKEQVITMFKRKTVRREWMRNSRQATTNINIAQIESLKLQLEEGEKDIAEAEKQAEPTTPQQEAELSETFKQMVRDRMKVKDVDEKLLQQYMKKENVEFEWRSCFICTMEYSRTDKNLHPIILNCGHNLCRSCINKLTGNGIVKCPFDRLDTRVRVTGLPRNLALINL</sequence>
<dbReference type="EMBL" id="FO080200">
    <property type="protein sequence ID" value="CCD61922.1"/>
    <property type="molecule type" value="Genomic_DNA"/>
</dbReference>
<dbReference type="PIR" id="C89606">
    <property type="entry name" value="C89606"/>
</dbReference>
<dbReference type="RefSeq" id="NP_509564.1">
    <property type="nucleotide sequence ID" value="NM_077163.2"/>
</dbReference>
<dbReference type="SMR" id="Q11072"/>
<dbReference type="STRING" id="6239.B0416.4.1"/>
<dbReference type="PaxDb" id="6239-B0416.4"/>
<dbReference type="EnsemblMetazoa" id="B0416.4.1">
    <property type="protein sequence ID" value="B0416.4.1"/>
    <property type="gene ID" value="WBGene00015180"/>
</dbReference>
<dbReference type="GeneID" id="181985"/>
<dbReference type="KEGG" id="cel:CELE_B0416.4"/>
<dbReference type="UCSC" id="B0416.4">
    <property type="organism name" value="c. elegans"/>
</dbReference>
<dbReference type="AGR" id="WB:WBGene00015180"/>
<dbReference type="CTD" id="181985"/>
<dbReference type="WormBase" id="B0416.4">
    <property type="protein sequence ID" value="CE02434"/>
    <property type="gene ID" value="WBGene00015180"/>
</dbReference>
<dbReference type="eggNOG" id="KOG4185">
    <property type="taxonomic scope" value="Eukaryota"/>
</dbReference>
<dbReference type="HOGENOM" id="CLU_1267920_0_0_1"/>
<dbReference type="InParanoid" id="Q11072"/>
<dbReference type="OMA" id="FICTMEY"/>
<dbReference type="OrthoDB" id="654191at2759"/>
<dbReference type="PhylomeDB" id="Q11072"/>
<dbReference type="PRO" id="PR:Q11072"/>
<dbReference type="Proteomes" id="UP000001940">
    <property type="component" value="Chromosome X"/>
</dbReference>
<dbReference type="Bgee" id="WBGene00015180">
    <property type="expression patterns" value="Expressed in embryo and 3 other cell types or tissues"/>
</dbReference>
<dbReference type="GO" id="GO:0008270">
    <property type="term" value="F:zinc ion binding"/>
    <property type="evidence" value="ECO:0007669"/>
    <property type="project" value="UniProtKB-KW"/>
</dbReference>
<dbReference type="Gene3D" id="3.30.40.10">
    <property type="entry name" value="Zinc/RING finger domain, C3HC4 (zinc finger)"/>
    <property type="match status" value="1"/>
</dbReference>
<dbReference type="InterPro" id="IPR052667">
    <property type="entry name" value="E3_ubiquitin-ligase_RING"/>
</dbReference>
<dbReference type="InterPro" id="IPR027370">
    <property type="entry name" value="Znf-RING_euk"/>
</dbReference>
<dbReference type="InterPro" id="IPR001841">
    <property type="entry name" value="Znf_RING"/>
</dbReference>
<dbReference type="InterPro" id="IPR013083">
    <property type="entry name" value="Znf_RING/FYVE/PHD"/>
</dbReference>
<dbReference type="InterPro" id="IPR017907">
    <property type="entry name" value="Znf_RING_CS"/>
</dbReference>
<dbReference type="PANTHER" id="PTHR47156">
    <property type="entry name" value="PROTEIN CBG20824"/>
    <property type="match status" value="1"/>
</dbReference>
<dbReference type="PANTHER" id="PTHR47156:SF9">
    <property type="entry name" value="PROTEIN CBG26870"/>
    <property type="match status" value="1"/>
</dbReference>
<dbReference type="Pfam" id="PF13445">
    <property type="entry name" value="zf-RING_UBOX"/>
    <property type="match status" value="1"/>
</dbReference>
<dbReference type="SMART" id="SM00184">
    <property type="entry name" value="RING"/>
    <property type="match status" value="1"/>
</dbReference>
<dbReference type="SUPFAM" id="SSF57850">
    <property type="entry name" value="RING/U-box"/>
    <property type="match status" value="1"/>
</dbReference>
<dbReference type="PROSITE" id="PS00518">
    <property type="entry name" value="ZF_RING_1"/>
    <property type="match status" value="1"/>
</dbReference>
<dbReference type="PROSITE" id="PS50089">
    <property type="entry name" value="ZF_RING_2"/>
    <property type="match status" value="1"/>
</dbReference>
<evidence type="ECO:0000255" key="1">
    <source>
        <dbReference type="PROSITE-ProRule" id="PRU00175"/>
    </source>
</evidence>